<comment type="function">
    <text evidence="1">Binds to 23S rRNA. Forms part of two intersubunit bridges in the 70S ribosome.</text>
</comment>
<comment type="subunit">
    <text evidence="1">Part of the 50S ribosomal subunit. Forms a cluster with proteins L3 and L19. In the 70S ribosome, L14 and L19 interact and together make contacts with the 16S rRNA in bridges B5 and B8.</text>
</comment>
<comment type="similarity">
    <text evidence="1">Belongs to the universal ribosomal protein uL14 family.</text>
</comment>
<organism>
    <name type="scientific">Campylobacter jejuni (strain RM1221)</name>
    <dbReference type="NCBI Taxonomy" id="195099"/>
    <lineage>
        <taxon>Bacteria</taxon>
        <taxon>Pseudomonadati</taxon>
        <taxon>Campylobacterota</taxon>
        <taxon>Epsilonproteobacteria</taxon>
        <taxon>Campylobacterales</taxon>
        <taxon>Campylobacteraceae</taxon>
        <taxon>Campylobacter</taxon>
    </lineage>
</organism>
<proteinExistence type="inferred from homology"/>
<accession>Q5HSA0</accession>
<name>RL14_CAMJR</name>
<keyword id="KW-0687">Ribonucleoprotein</keyword>
<keyword id="KW-0689">Ribosomal protein</keyword>
<keyword id="KW-0694">RNA-binding</keyword>
<keyword id="KW-0699">rRNA-binding</keyword>
<protein>
    <recommendedName>
        <fullName evidence="1">Large ribosomal subunit protein uL14</fullName>
    </recommendedName>
    <alternativeName>
        <fullName evidence="2">50S ribosomal protein L14</fullName>
    </alternativeName>
</protein>
<gene>
    <name evidence="1" type="primary">rplN</name>
    <name type="ordered locus">CJE1865</name>
</gene>
<sequence length="122" mass="13306">MIQSFTRLAVADNSGAKELMCIKVLGGSKRRYATVGDVIVASVKKALPNGKVKKGQVVKAVIVRTKKEIHRDNGSLIRFDENAAVILDNKREPIGTRIFGPVGREVRYGGFMKIVSLAPEVL</sequence>
<dbReference type="EMBL" id="CP000025">
    <property type="protein sequence ID" value="AAW36287.1"/>
    <property type="molecule type" value="Genomic_DNA"/>
</dbReference>
<dbReference type="PIR" id="E81267">
    <property type="entry name" value="E81267"/>
</dbReference>
<dbReference type="RefSeq" id="WP_002779438.1">
    <property type="nucleotide sequence ID" value="NC_003912.7"/>
</dbReference>
<dbReference type="SMR" id="Q5HSA0"/>
<dbReference type="GeneID" id="66544933"/>
<dbReference type="KEGG" id="cjr:CJE1865"/>
<dbReference type="HOGENOM" id="CLU_095071_2_1_7"/>
<dbReference type="GO" id="GO:0022625">
    <property type="term" value="C:cytosolic large ribosomal subunit"/>
    <property type="evidence" value="ECO:0007669"/>
    <property type="project" value="TreeGrafter"/>
</dbReference>
<dbReference type="GO" id="GO:0070180">
    <property type="term" value="F:large ribosomal subunit rRNA binding"/>
    <property type="evidence" value="ECO:0007669"/>
    <property type="project" value="TreeGrafter"/>
</dbReference>
<dbReference type="GO" id="GO:0003735">
    <property type="term" value="F:structural constituent of ribosome"/>
    <property type="evidence" value="ECO:0007669"/>
    <property type="project" value="InterPro"/>
</dbReference>
<dbReference type="GO" id="GO:0006412">
    <property type="term" value="P:translation"/>
    <property type="evidence" value="ECO:0007669"/>
    <property type="project" value="UniProtKB-UniRule"/>
</dbReference>
<dbReference type="CDD" id="cd00337">
    <property type="entry name" value="Ribosomal_uL14"/>
    <property type="match status" value="1"/>
</dbReference>
<dbReference type="FunFam" id="2.40.150.20:FF:000001">
    <property type="entry name" value="50S ribosomal protein L14"/>
    <property type="match status" value="1"/>
</dbReference>
<dbReference type="Gene3D" id="2.40.150.20">
    <property type="entry name" value="Ribosomal protein L14"/>
    <property type="match status" value="1"/>
</dbReference>
<dbReference type="HAMAP" id="MF_01367">
    <property type="entry name" value="Ribosomal_uL14"/>
    <property type="match status" value="1"/>
</dbReference>
<dbReference type="InterPro" id="IPR000218">
    <property type="entry name" value="Ribosomal_uL14"/>
</dbReference>
<dbReference type="InterPro" id="IPR005745">
    <property type="entry name" value="Ribosomal_uL14_bac-type"/>
</dbReference>
<dbReference type="InterPro" id="IPR019972">
    <property type="entry name" value="Ribosomal_uL14_CS"/>
</dbReference>
<dbReference type="InterPro" id="IPR036853">
    <property type="entry name" value="Ribosomal_uL14_sf"/>
</dbReference>
<dbReference type="NCBIfam" id="TIGR01067">
    <property type="entry name" value="rplN_bact"/>
    <property type="match status" value="1"/>
</dbReference>
<dbReference type="PANTHER" id="PTHR11761">
    <property type="entry name" value="50S/60S RIBOSOMAL PROTEIN L14/L23"/>
    <property type="match status" value="1"/>
</dbReference>
<dbReference type="PANTHER" id="PTHR11761:SF3">
    <property type="entry name" value="LARGE RIBOSOMAL SUBUNIT PROTEIN UL14M"/>
    <property type="match status" value="1"/>
</dbReference>
<dbReference type="Pfam" id="PF00238">
    <property type="entry name" value="Ribosomal_L14"/>
    <property type="match status" value="1"/>
</dbReference>
<dbReference type="SMART" id="SM01374">
    <property type="entry name" value="Ribosomal_L14"/>
    <property type="match status" value="1"/>
</dbReference>
<dbReference type="SUPFAM" id="SSF50193">
    <property type="entry name" value="Ribosomal protein L14"/>
    <property type="match status" value="1"/>
</dbReference>
<dbReference type="PROSITE" id="PS00049">
    <property type="entry name" value="RIBOSOMAL_L14"/>
    <property type="match status" value="1"/>
</dbReference>
<evidence type="ECO:0000255" key="1">
    <source>
        <dbReference type="HAMAP-Rule" id="MF_01367"/>
    </source>
</evidence>
<evidence type="ECO:0000305" key="2"/>
<reference key="1">
    <citation type="journal article" date="2005" name="PLoS Biol.">
        <title>Major structural differences and novel potential virulence mechanisms from the genomes of multiple Campylobacter species.</title>
        <authorList>
            <person name="Fouts D.E."/>
            <person name="Mongodin E.F."/>
            <person name="Mandrell R.E."/>
            <person name="Miller W.G."/>
            <person name="Rasko D.A."/>
            <person name="Ravel J."/>
            <person name="Brinkac L.M."/>
            <person name="DeBoy R.T."/>
            <person name="Parker C.T."/>
            <person name="Daugherty S.C."/>
            <person name="Dodson R.J."/>
            <person name="Durkin A.S."/>
            <person name="Madupu R."/>
            <person name="Sullivan S.A."/>
            <person name="Shetty J.U."/>
            <person name="Ayodeji M.A."/>
            <person name="Shvartsbeyn A."/>
            <person name="Schatz M.C."/>
            <person name="Badger J.H."/>
            <person name="Fraser C.M."/>
            <person name="Nelson K.E."/>
        </authorList>
    </citation>
    <scope>NUCLEOTIDE SEQUENCE [LARGE SCALE GENOMIC DNA]</scope>
    <source>
        <strain>RM1221</strain>
    </source>
</reference>
<feature type="chain" id="PRO_1000055547" description="Large ribosomal subunit protein uL14">
    <location>
        <begin position="1"/>
        <end position="122"/>
    </location>
</feature>